<proteinExistence type="inferred from homology"/>
<organism>
    <name type="scientific">Methylobacterium radiotolerans (strain ATCC 27329 / DSM 1819 / JCM 2831 / NBRC 15690 / NCIMB 10815 / 0-1)</name>
    <dbReference type="NCBI Taxonomy" id="426355"/>
    <lineage>
        <taxon>Bacteria</taxon>
        <taxon>Pseudomonadati</taxon>
        <taxon>Pseudomonadota</taxon>
        <taxon>Alphaproteobacteria</taxon>
        <taxon>Hyphomicrobiales</taxon>
        <taxon>Methylobacteriaceae</taxon>
        <taxon>Methylobacterium</taxon>
    </lineage>
</organism>
<evidence type="ECO:0000255" key="1">
    <source>
        <dbReference type="HAMAP-Rule" id="MF_00353"/>
    </source>
</evidence>
<feature type="chain" id="PRO_1000120529" description="Light-independent protochlorophyllide reductase subunit B">
    <location>
        <begin position="1"/>
        <end position="532"/>
    </location>
</feature>
<feature type="active site" description="Proton donor" evidence="1">
    <location>
        <position position="282"/>
    </location>
</feature>
<feature type="binding site" evidence="1">
    <location>
        <position position="36"/>
    </location>
    <ligand>
        <name>[4Fe-4S] cluster</name>
        <dbReference type="ChEBI" id="CHEBI:49883"/>
        <note>ligand shared with heterodimeric partner</note>
    </ligand>
</feature>
<feature type="binding site" evidence="1">
    <location>
        <begin position="417"/>
        <end position="418"/>
    </location>
    <ligand>
        <name>substrate</name>
    </ligand>
</feature>
<comment type="function">
    <text evidence="1">Component of the dark-operative protochlorophyllide reductase (DPOR) that uses Mg-ATP and reduced ferredoxin to reduce ring D of protochlorophyllide (Pchlide) to form chlorophyllide a (Chlide). This reaction is light-independent. The NB-protein (BchN-BchB) is the catalytic component of the complex.</text>
</comment>
<comment type="catalytic activity">
    <reaction evidence="1">
        <text>chlorophyllide a + oxidized 2[4Fe-4S]-[ferredoxin] + 2 ADP + 2 phosphate = protochlorophyllide a + reduced 2[4Fe-4S]-[ferredoxin] + 2 ATP + 2 H2O</text>
        <dbReference type="Rhea" id="RHEA:28202"/>
        <dbReference type="Rhea" id="RHEA-COMP:10002"/>
        <dbReference type="Rhea" id="RHEA-COMP:10004"/>
        <dbReference type="ChEBI" id="CHEBI:15377"/>
        <dbReference type="ChEBI" id="CHEBI:30616"/>
        <dbReference type="ChEBI" id="CHEBI:33722"/>
        <dbReference type="ChEBI" id="CHEBI:33723"/>
        <dbReference type="ChEBI" id="CHEBI:43474"/>
        <dbReference type="ChEBI" id="CHEBI:83348"/>
        <dbReference type="ChEBI" id="CHEBI:83350"/>
        <dbReference type="ChEBI" id="CHEBI:456216"/>
        <dbReference type="EC" id="1.3.7.7"/>
    </reaction>
</comment>
<comment type="cofactor">
    <cofactor evidence="1">
        <name>[4Fe-4S] cluster</name>
        <dbReference type="ChEBI" id="CHEBI:49883"/>
    </cofactor>
    <text evidence="1">Binds 1 [4Fe-4S] cluster per heterodimer. The cluster is bound at the heterodimer interface by residues from both subunits.</text>
</comment>
<comment type="pathway">
    <text evidence="1">Porphyrin-containing compound metabolism; bacteriochlorophyll biosynthesis (light-independent).</text>
</comment>
<comment type="subunit">
    <text evidence="1">Protochlorophyllide reductase is composed of three subunits; BchL, BchN and BchB. Forms a heterotetramer of two BchB and two BchN subunits.</text>
</comment>
<comment type="similarity">
    <text evidence="1">Belongs to the ChlB/BchB/BchZ family.</text>
</comment>
<reference key="1">
    <citation type="submission" date="2008-03" db="EMBL/GenBank/DDBJ databases">
        <title>Complete sequence of chromosome of Methylobacterium radiotolerans JCM 2831.</title>
        <authorList>
            <consortium name="US DOE Joint Genome Institute"/>
            <person name="Copeland A."/>
            <person name="Lucas S."/>
            <person name="Lapidus A."/>
            <person name="Glavina del Rio T."/>
            <person name="Dalin E."/>
            <person name="Tice H."/>
            <person name="Bruce D."/>
            <person name="Goodwin L."/>
            <person name="Pitluck S."/>
            <person name="Kiss H."/>
            <person name="Brettin T."/>
            <person name="Detter J.C."/>
            <person name="Han C."/>
            <person name="Kuske C.R."/>
            <person name="Schmutz J."/>
            <person name="Larimer F."/>
            <person name="Land M."/>
            <person name="Hauser L."/>
            <person name="Kyrpides N."/>
            <person name="Mikhailova N."/>
            <person name="Marx C.J."/>
            <person name="Richardson P."/>
        </authorList>
    </citation>
    <scope>NUCLEOTIDE SEQUENCE [LARGE SCALE GENOMIC DNA]</scope>
    <source>
        <strain>ATCC 27329 / DSM 1819 / JCM 2831 / NBRC 15690 / NCIMB 10815 / 0-1</strain>
    </source>
</reference>
<protein>
    <recommendedName>
        <fullName evidence="1">Light-independent protochlorophyllide reductase subunit B</fullName>
        <shortName evidence="1">DPOR subunit B</shortName>
        <shortName evidence="1">LI-POR subunit B</shortName>
        <ecNumber evidence="1">1.3.7.7</ecNumber>
    </recommendedName>
</protein>
<keyword id="KW-0004">4Fe-4S</keyword>
<keyword id="KW-0067">ATP-binding</keyword>
<keyword id="KW-0077">Bacteriochlorophyll biosynthesis</keyword>
<keyword id="KW-0149">Chlorophyll biosynthesis</keyword>
<keyword id="KW-0408">Iron</keyword>
<keyword id="KW-0411">Iron-sulfur</keyword>
<keyword id="KW-0479">Metal-binding</keyword>
<keyword id="KW-0547">Nucleotide-binding</keyword>
<keyword id="KW-0560">Oxidoreductase</keyword>
<keyword id="KW-0602">Photosynthesis</keyword>
<sequence>MQLTLWTYEGPPHIGAMRVATAMSGLHYVLHAPQGDTYADLLFTMIERRDARPPVTYTTFRAQDLGRDTAELFKEAVAAAHARFRPQAMIVGASCTAELIQDDPGGLAKALDLPIPVIPLELPAYQKKENWGASETFYRLVRALAGAPAPRPAREPGRRPLCNILGPTALGFRHRDDLIEIRRLLDTLGIAVNVVAPLGATPADLGRLRDADFNVVLYPETARSAADYLKKAFGQPFTQTIPIGVGGTRRFVEEVAGLAGIDPAPVLDGSGSRLPWYSRSVDSTYLTGKRVFMFGDATHAIGIARVAAKELGFTLVGLGTYGREFAREVRAEAAAHGIEALVTDDYLDVEAAIRAAAPELVLGTQMERHVAKRLGIPCAVISAPVHVQDFPARYAPQMGFEGANVLFDTLVHPLMMGLEEHLLGMFREDPEFHDGVGPSHLGGKSFGTPADEAFEAAERAPADTPPTPAPVPILLERPAATAWSPEAEKELKKIPFFVRGKARTNTETFARERHLPLITLETLYDAKAHYGR</sequence>
<accession>B1LSG1</accession>
<name>BCHB_METRJ</name>
<gene>
    <name evidence="1" type="primary">bchB</name>
    <name type="ordered locus">Mrad2831_1847</name>
</gene>
<dbReference type="EC" id="1.3.7.7" evidence="1"/>
<dbReference type="EMBL" id="CP001001">
    <property type="protein sequence ID" value="ACB23842.1"/>
    <property type="molecule type" value="Genomic_DNA"/>
</dbReference>
<dbReference type="RefSeq" id="WP_012318828.1">
    <property type="nucleotide sequence ID" value="NC_010505.1"/>
</dbReference>
<dbReference type="SMR" id="B1LSG1"/>
<dbReference type="STRING" id="426355.Mrad2831_1847"/>
<dbReference type="GeneID" id="6137876"/>
<dbReference type="KEGG" id="mrd:Mrad2831_1847"/>
<dbReference type="PATRIC" id="fig|426355.14.peg.1902"/>
<dbReference type="eggNOG" id="COG2710">
    <property type="taxonomic scope" value="Bacteria"/>
</dbReference>
<dbReference type="HOGENOM" id="CLU_025470_0_0_5"/>
<dbReference type="OrthoDB" id="5717231at2"/>
<dbReference type="UniPathway" id="UPA00671"/>
<dbReference type="Proteomes" id="UP000006589">
    <property type="component" value="Chromosome"/>
</dbReference>
<dbReference type="GO" id="GO:0051539">
    <property type="term" value="F:4 iron, 4 sulfur cluster binding"/>
    <property type="evidence" value="ECO:0007669"/>
    <property type="project" value="UniProtKB-UniRule"/>
</dbReference>
<dbReference type="GO" id="GO:0005524">
    <property type="term" value="F:ATP binding"/>
    <property type="evidence" value="ECO:0007669"/>
    <property type="project" value="UniProtKB-UniRule"/>
</dbReference>
<dbReference type="GO" id="GO:0046872">
    <property type="term" value="F:metal ion binding"/>
    <property type="evidence" value="ECO:0007669"/>
    <property type="project" value="UniProtKB-KW"/>
</dbReference>
<dbReference type="GO" id="GO:0016730">
    <property type="term" value="F:oxidoreductase activity, acting on iron-sulfur proteins as donors"/>
    <property type="evidence" value="ECO:0007669"/>
    <property type="project" value="InterPro"/>
</dbReference>
<dbReference type="GO" id="GO:0016636">
    <property type="term" value="F:oxidoreductase activity, acting on the CH-CH group of donors, iron-sulfur protein as acceptor"/>
    <property type="evidence" value="ECO:0007669"/>
    <property type="project" value="UniProtKB-UniRule"/>
</dbReference>
<dbReference type="GO" id="GO:0036070">
    <property type="term" value="P:light-independent bacteriochlorophyll biosynthetic process"/>
    <property type="evidence" value="ECO:0007669"/>
    <property type="project" value="UniProtKB-UniRule"/>
</dbReference>
<dbReference type="GO" id="GO:0019685">
    <property type="term" value="P:photosynthesis, dark reaction"/>
    <property type="evidence" value="ECO:0007669"/>
    <property type="project" value="InterPro"/>
</dbReference>
<dbReference type="Gene3D" id="1.20.89.20">
    <property type="match status" value="1"/>
</dbReference>
<dbReference type="Gene3D" id="3.40.50.1980">
    <property type="entry name" value="Nitrogenase molybdenum iron protein domain"/>
    <property type="match status" value="3"/>
</dbReference>
<dbReference type="Gene3D" id="1.10.8.550">
    <property type="entry name" value="Proto-chlorophyllide reductase 57 kD subunit B"/>
    <property type="match status" value="1"/>
</dbReference>
<dbReference type="HAMAP" id="MF_00353">
    <property type="entry name" value="ChlB_BchB"/>
    <property type="match status" value="1"/>
</dbReference>
<dbReference type="InterPro" id="IPR050152">
    <property type="entry name" value="ChlB/BchB/BchZ"/>
</dbReference>
<dbReference type="InterPro" id="IPR013580">
    <property type="entry name" value="LI-POR_suB-like_C"/>
</dbReference>
<dbReference type="InterPro" id="IPR000510">
    <property type="entry name" value="Nase/OxRdtase_comp1"/>
</dbReference>
<dbReference type="InterPro" id="IPR042298">
    <property type="entry name" value="P-CP_red_C"/>
</dbReference>
<dbReference type="InterPro" id="IPR005969">
    <property type="entry name" value="Protochl_reductB"/>
</dbReference>
<dbReference type="InterPro" id="IPR016209">
    <property type="entry name" value="Protochlorophyllide_Rdtase"/>
</dbReference>
<dbReference type="NCBIfam" id="TIGR01278">
    <property type="entry name" value="DPOR_BchB"/>
    <property type="match status" value="1"/>
</dbReference>
<dbReference type="PANTHER" id="PTHR33712">
    <property type="entry name" value="LIGHT-INDEPENDENT PROTOCHLOROPHYLLIDE REDUCTASE SUBUNIT B"/>
    <property type="match status" value="1"/>
</dbReference>
<dbReference type="PANTHER" id="PTHR33712:SF7">
    <property type="entry name" value="LIGHT-INDEPENDENT PROTOCHLOROPHYLLIDE REDUCTASE SUBUNIT B"/>
    <property type="match status" value="1"/>
</dbReference>
<dbReference type="Pfam" id="PF00148">
    <property type="entry name" value="Oxidored_nitro"/>
    <property type="match status" value="1"/>
</dbReference>
<dbReference type="Pfam" id="PF08369">
    <property type="entry name" value="PCP_red"/>
    <property type="match status" value="1"/>
</dbReference>
<dbReference type="PIRSF" id="PIRSF000163">
    <property type="entry name" value="PCP_ChlB"/>
    <property type="match status" value="1"/>
</dbReference>
<dbReference type="SUPFAM" id="SSF53807">
    <property type="entry name" value="Helical backbone' metal receptor"/>
    <property type="match status" value="1"/>
</dbReference>